<evidence type="ECO:0000255" key="1">
    <source>
        <dbReference type="HAMAP-Rule" id="MF_00236"/>
    </source>
</evidence>
<accession>Q31E61</accession>
<sequence>MGISIWQLLIILAIVLVLFGAKRLKNVGSDLGGAIKGFKKAVSDEDKKEDEKVTAEQKLEQKEGENVFDVKAEQKADEKSETKDKA</sequence>
<comment type="function">
    <text evidence="1">Part of the twin-arginine translocation (Tat) system that transports large folded proteins containing a characteristic twin-arginine motif in their signal peptide across membranes. TatA could form the protein-conducting channel of the Tat system.</text>
</comment>
<comment type="subunit">
    <text evidence="1">The Tat system comprises two distinct complexes: a TatABC complex, containing multiple copies of TatA, TatB and TatC subunits, and a separate TatA complex, containing only TatA subunits. Substrates initially bind to the TatABC complex, which probably triggers association of the separate TatA complex to form the active translocon.</text>
</comment>
<comment type="subcellular location">
    <subcellularLocation>
        <location evidence="1">Cell inner membrane</location>
        <topology evidence="1">Single-pass membrane protein</topology>
    </subcellularLocation>
</comment>
<comment type="similarity">
    <text evidence="1">Belongs to the TatA/E family.</text>
</comment>
<organism>
    <name type="scientific">Hydrogenovibrio crunogenus (strain DSM 25203 / XCL-2)</name>
    <name type="common">Thiomicrospira crunogena</name>
    <dbReference type="NCBI Taxonomy" id="317025"/>
    <lineage>
        <taxon>Bacteria</taxon>
        <taxon>Pseudomonadati</taxon>
        <taxon>Pseudomonadota</taxon>
        <taxon>Gammaproteobacteria</taxon>
        <taxon>Thiotrichales</taxon>
        <taxon>Piscirickettsiaceae</taxon>
        <taxon>Hydrogenovibrio</taxon>
    </lineage>
</organism>
<proteinExistence type="inferred from homology"/>
<dbReference type="EMBL" id="CP000109">
    <property type="protein sequence ID" value="ABB42562.1"/>
    <property type="molecule type" value="Genomic_DNA"/>
</dbReference>
<dbReference type="SMR" id="Q31E61"/>
<dbReference type="STRING" id="317025.Tcr_1972"/>
<dbReference type="KEGG" id="tcx:Tcr_1972"/>
<dbReference type="eggNOG" id="COG1826">
    <property type="taxonomic scope" value="Bacteria"/>
</dbReference>
<dbReference type="HOGENOM" id="CLU_086034_5_1_6"/>
<dbReference type="OrthoDB" id="7066617at2"/>
<dbReference type="GO" id="GO:0033281">
    <property type="term" value="C:TAT protein transport complex"/>
    <property type="evidence" value="ECO:0007669"/>
    <property type="project" value="UniProtKB-UniRule"/>
</dbReference>
<dbReference type="GO" id="GO:0008320">
    <property type="term" value="F:protein transmembrane transporter activity"/>
    <property type="evidence" value="ECO:0007669"/>
    <property type="project" value="UniProtKB-UniRule"/>
</dbReference>
<dbReference type="GO" id="GO:0043953">
    <property type="term" value="P:protein transport by the Tat complex"/>
    <property type="evidence" value="ECO:0007669"/>
    <property type="project" value="UniProtKB-UniRule"/>
</dbReference>
<dbReference type="Gene3D" id="1.20.5.3310">
    <property type="match status" value="1"/>
</dbReference>
<dbReference type="HAMAP" id="MF_00236">
    <property type="entry name" value="TatA_E"/>
    <property type="match status" value="1"/>
</dbReference>
<dbReference type="InterPro" id="IPR003369">
    <property type="entry name" value="TatA/B/E"/>
</dbReference>
<dbReference type="InterPro" id="IPR006312">
    <property type="entry name" value="TatA/E"/>
</dbReference>
<dbReference type="NCBIfam" id="TIGR01411">
    <property type="entry name" value="tatAE"/>
    <property type="match status" value="1"/>
</dbReference>
<dbReference type="PANTHER" id="PTHR42982">
    <property type="entry name" value="SEC-INDEPENDENT PROTEIN TRANSLOCASE PROTEIN TATA"/>
    <property type="match status" value="1"/>
</dbReference>
<dbReference type="PANTHER" id="PTHR42982:SF1">
    <property type="entry name" value="SEC-INDEPENDENT PROTEIN TRANSLOCASE PROTEIN TATA"/>
    <property type="match status" value="1"/>
</dbReference>
<dbReference type="Pfam" id="PF02416">
    <property type="entry name" value="TatA_B_E"/>
    <property type="match status" value="1"/>
</dbReference>
<keyword id="KW-0997">Cell inner membrane</keyword>
<keyword id="KW-1003">Cell membrane</keyword>
<keyword id="KW-0472">Membrane</keyword>
<keyword id="KW-0653">Protein transport</keyword>
<keyword id="KW-0811">Translocation</keyword>
<keyword id="KW-0812">Transmembrane</keyword>
<keyword id="KW-1133">Transmembrane helix</keyword>
<keyword id="KW-0813">Transport</keyword>
<feature type="chain" id="PRO_1000058972" description="Sec-independent protein translocase protein TatA">
    <location>
        <begin position="1"/>
        <end position="86"/>
    </location>
</feature>
<feature type="transmembrane region" description="Helical" evidence="1">
    <location>
        <begin position="1"/>
        <end position="21"/>
    </location>
</feature>
<reference key="1">
    <citation type="journal article" date="2006" name="PLoS Biol.">
        <title>The genome of deep-sea vent chemolithoautotroph Thiomicrospira crunogena XCL-2.</title>
        <authorList>
            <person name="Scott K.M."/>
            <person name="Sievert S.M."/>
            <person name="Abril F.N."/>
            <person name="Ball L.A."/>
            <person name="Barrett C.J."/>
            <person name="Blake R.A."/>
            <person name="Boller A.J."/>
            <person name="Chain P.S.G."/>
            <person name="Clark J.A."/>
            <person name="Davis C.R."/>
            <person name="Detter C."/>
            <person name="Do K.F."/>
            <person name="Dobrinski K.P."/>
            <person name="Faza B.I."/>
            <person name="Fitzpatrick K.A."/>
            <person name="Freyermuth S.K."/>
            <person name="Harmer T.L."/>
            <person name="Hauser L.J."/>
            <person name="Huegler M."/>
            <person name="Kerfeld C.A."/>
            <person name="Klotz M.G."/>
            <person name="Kong W.W."/>
            <person name="Land M."/>
            <person name="Lapidus A."/>
            <person name="Larimer F.W."/>
            <person name="Longo D.L."/>
            <person name="Lucas S."/>
            <person name="Malfatti S.A."/>
            <person name="Massey S.E."/>
            <person name="Martin D.D."/>
            <person name="McCuddin Z."/>
            <person name="Meyer F."/>
            <person name="Moore J.L."/>
            <person name="Ocampo L.H. Jr."/>
            <person name="Paul J.H."/>
            <person name="Paulsen I.T."/>
            <person name="Reep D.K."/>
            <person name="Ren Q."/>
            <person name="Ross R.L."/>
            <person name="Sato P.Y."/>
            <person name="Thomas P."/>
            <person name="Tinkham L.E."/>
            <person name="Zeruth G.T."/>
        </authorList>
    </citation>
    <scope>NUCLEOTIDE SEQUENCE [LARGE SCALE GENOMIC DNA]</scope>
    <source>
        <strain>DSM 25203 / XCL-2</strain>
    </source>
</reference>
<protein>
    <recommendedName>
        <fullName evidence="1">Sec-independent protein translocase protein TatA</fullName>
    </recommendedName>
</protein>
<name>TATA_HYDCU</name>
<gene>
    <name evidence="1" type="primary">tatA</name>
    <name type="ordered locus">Tcr_1972</name>
</gene>